<sequence>MSRKQLALFEPTLVVQALKEAVKKLNPQAQWRNPVMFIVWIGSLLTTCISIAMASGAMPGNALFSAAISGWLWVTVLFANFAEALAEGRSKAQANSLKGVKKTAFARKLREPKYGAAADKVPADQLRKGDIVLVEAGDIIPCDGEVIEGGASVDESAITGESAPVIRESGGDFASVTGGTRILSDWLVIECSVNPGETFLDRMIAMVEGAQRRKTPNEIALTILLIALTIVFLLATATLWPFSAWGGNAVSVTVLVALLVCLIPTTIGGLLSAIGVAGMSRMLGANVIATSGRAVEAAGDVDVLLLDKTGTITLGNRQASEFIPAQGVDEKTLADAAQLASLADETPEGRSIVILAKQRFNLRERDVQSLHATFVPFTAQSRMSGINIDNRMIRKGSVDAIRRHVEANGGHFPTDVDQKVDQVARQGATPLVVVEGSRVLGVIALKDIVKGGIKERFAQLRKMGIKTVMITGDNRLTAAAIAAEAGVDDFLAEATPEAKLALIRQYQAEGRLVAMTGDGTNDAPALAQADVAVAMNSGTQAAKEAGNMVDLDSNPTKLIEVVHIGKQMLMTRGSLTTFSIANDVAKYFAIIPAAFAATYPQLNALNIMRLHSPDSAILSAVIFNALIIVFLIPLALKGVSYKPLTASAMLRRNLWIYGLGGLLVPFIGIKVIDLLLTVCGLV</sequence>
<protein>
    <recommendedName>
        <fullName evidence="1">Potassium-transporting ATPase ATP-binding subunit</fullName>
        <ecNumber evidence="1">7.2.2.6</ecNumber>
    </recommendedName>
    <alternativeName>
        <fullName evidence="1">ATP phosphohydrolase [potassium-transporting] B chain</fullName>
    </alternativeName>
    <alternativeName>
        <fullName evidence="1">Potassium-binding and translocating subunit B</fullName>
    </alternativeName>
    <alternativeName>
        <fullName evidence="1">Potassium-translocating ATPase B chain</fullName>
    </alternativeName>
</protein>
<evidence type="ECO:0000255" key="1">
    <source>
        <dbReference type="HAMAP-Rule" id="MF_00285"/>
    </source>
</evidence>
<organism>
    <name type="scientific">Escherichia coli (strain SE11)</name>
    <dbReference type="NCBI Taxonomy" id="409438"/>
    <lineage>
        <taxon>Bacteria</taxon>
        <taxon>Pseudomonadati</taxon>
        <taxon>Pseudomonadota</taxon>
        <taxon>Gammaproteobacteria</taxon>
        <taxon>Enterobacterales</taxon>
        <taxon>Enterobacteriaceae</taxon>
        <taxon>Escherichia</taxon>
    </lineage>
</organism>
<comment type="function">
    <text evidence="1">Part of the high-affinity ATP-driven potassium transport (or Kdp) system, which catalyzes the hydrolysis of ATP coupled with the electrogenic transport of potassium into the cytoplasm. This subunit is responsible for energy coupling to the transport system and for the release of the potassium ions to the cytoplasm.</text>
</comment>
<comment type="catalytic activity">
    <reaction evidence="1">
        <text>K(+)(out) + ATP + H2O = K(+)(in) + ADP + phosphate + H(+)</text>
        <dbReference type="Rhea" id="RHEA:16777"/>
        <dbReference type="ChEBI" id="CHEBI:15377"/>
        <dbReference type="ChEBI" id="CHEBI:15378"/>
        <dbReference type="ChEBI" id="CHEBI:29103"/>
        <dbReference type="ChEBI" id="CHEBI:30616"/>
        <dbReference type="ChEBI" id="CHEBI:43474"/>
        <dbReference type="ChEBI" id="CHEBI:456216"/>
        <dbReference type="EC" id="7.2.2.6"/>
    </reaction>
    <physiologicalReaction direction="left-to-right" evidence="1">
        <dbReference type="Rhea" id="RHEA:16778"/>
    </physiologicalReaction>
</comment>
<comment type="subunit">
    <text evidence="1">The system is composed of three essential subunits: KdpA, KdpB and KdpC.</text>
</comment>
<comment type="subcellular location">
    <subcellularLocation>
        <location evidence="1">Cell inner membrane</location>
        <topology evidence="1">Multi-pass membrane protein</topology>
    </subcellularLocation>
</comment>
<comment type="similarity">
    <text evidence="1">Belongs to the cation transport ATPase (P-type) (TC 3.A.3) family. Type IA subfamily.</text>
</comment>
<dbReference type="EC" id="7.2.2.6" evidence="1"/>
<dbReference type="EMBL" id="AP009240">
    <property type="protein sequence ID" value="BAG76281.1"/>
    <property type="molecule type" value="Genomic_DNA"/>
</dbReference>
<dbReference type="RefSeq" id="WP_000087967.1">
    <property type="nucleotide sequence ID" value="NC_011415.1"/>
</dbReference>
<dbReference type="SMR" id="B6HYQ5"/>
<dbReference type="GeneID" id="75204950"/>
<dbReference type="KEGG" id="ecy:ECSE_0757"/>
<dbReference type="HOGENOM" id="CLU_025728_2_0_6"/>
<dbReference type="Proteomes" id="UP000008199">
    <property type="component" value="Chromosome"/>
</dbReference>
<dbReference type="GO" id="GO:0005886">
    <property type="term" value="C:plasma membrane"/>
    <property type="evidence" value="ECO:0007669"/>
    <property type="project" value="UniProtKB-SubCell"/>
</dbReference>
<dbReference type="GO" id="GO:0005524">
    <property type="term" value="F:ATP binding"/>
    <property type="evidence" value="ECO:0007669"/>
    <property type="project" value="UniProtKB-UniRule"/>
</dbReference>
<dbReference type="GO" id="GO:0016887">
    <property type="term" value="F:ATP hydrolysis activity"/>
    <property type="evidence" value="ECO:0007669"/>
    <property type="project" value="InterPro"/>
</dbReference>
<dbReference type="GO" id="GO:0000287">
    <property type="term" value="F:magnesium ion binding"/>
    <property type="evidence" value="ECO:0007669"/>
    <property type="project" value="UniProtKB-UniRule"/>
</dbReference>
<dbReference type="GO" id="GO:0008556">
    <property type="term" value="F:P-type potassium transmembrane transporter activity"/>
    <property type="evidence" value="ECO:0007669"/>
    <property type="project" value="UniProtKB-UniRule"/>
</dbReference>
<dbReference type="CDD" id="cd02078">
    <property type="entry name" value="P-type_ATPase_K"/>
    <property type="match status" value="1"/>
</dbReference>
<dbReference type="FunFam" id="2.70.150.10:FF:000010">
    <property type="entry name" value="Potassium-transporting ATPase ATP-binding subunit"/>
    <property type="match status" value="1"/>
</dbReference>
<dbReference type="FunFam" id="3.40.1110.10:FF:000007">
    <property type="entry name" value="Potassium-transporting ATPase ATP-binding subunit"/>
    <property type="match status" value="1"/>
</dbReference>
<dbReference type="Gene3D" id="3.40.1110.10">
    <property type="entry name" value="Calcium-transporting ATPase, cytoplasmic domain N"/>
    <property type="match status" value="1"/>
</dbReference>
<dbReference type="Gene3D" id="2.70.150.10">
    <property type="entry name" value="Calcium-transporting ATPase, cytoplasmic transduction domain A"/>
    <property type="match status" value="1"/>
</dbReference>
<dbReference type="Gene3D" id="3.40.50.1000">
    <property type="entry name" value="HAD superfamily/HAD-like"/>
    <property type="match status" value="1"/>
</dbReference>
<dbReference type="HAMAP" id="MF_00285">
    <property type="entry name" value="KdpB"/>
    <property type="match status" value="1"/>
</dbReference>
<dbReference type="InterPro" id="IPR023299">
    <property type="entry name" value="ATPase_P-typ_cyto_dom_N"/>
</dbReference>
<dbReference type="InterPro" id="IPR018303">
    <property type="entry name" value="ATPase_P-typ_P_site"/>
</dbReference>
<dbReference type="InterPro" id="IPR023298">
    <property type="entry name" value="ATPase_P-typ_TM_dom_sf"/>
</dbReference>
<dbReference type="InterPro" id="IPR008250">
    <property type="entry name" value="ATPase_P-typ_transduc_dom_A_sf"/>
</dbReference>
<dbReference type="InterPro" id="IPR036412">
    <property type="entry name" value="HAD-like_sf"/>
</dbReference>
<dbReference type="InterPro" id="IPR023214">
    <property type="entry name" value="HAD_sf"/>
</dbReference>
<dbReference type="InterPro" id="IPR006391">
    <property type="entry name" value="P-type_ATPase_bsu_IA"/>
</dbReference>
<dbReference type="InterPro" id="IPR001757">
    <property type="entry name" value="P_typ_ATPase"/>
</dbReference>
<dbReference type="InterPro" id="IPR044492">
    <property type="entry name" value="P_typ_ATPase_HD_dom"/>
</dbReference>
<dbReference type="NCBIfam" id="TIGR01494">
    <property type="entry name" value="ATPase_P-type"/>
    <property type="match status" value="2"/>
</dbReference>
<dbReference type="NCBIfam" id="TIGR01497">
    <property type="entry name" value="kdpB"/>
    <property type="match status" value="1"/>
</dbReference>
<dbReference type="PANTHER" id="PTHR43743">
    <property type="entry name" value="POTASSIUM-TRANSPORTING ATPASE ATP-BINDING SUBUNIT"/>
    <property type="match status" value="1"/>
</dbReference>
<dbReference type="PANTHER" id="PTHR43743:SF1">
    <property type="entry name" value="POTASSIUM-TRANSPORTING ATPASE ATP-BINDING SUBUNIT"/>
    <property type="match status" value="1"/>
</dbReference>
<dbReference type="Pfam" id="PF00122">
    <property type="entry name" value="E1-E2_ATPase"/>
    <property type="match status" value="1"/>
</dbReference>
<dbReference type="Pfam" id="PF00702">
    <property type="entry name" value="Hydrolase"/>
    <property type="match status" value="1"/>
</dbReference>
<dbReference type="PRINTS" id="PR00119">
    <property type="entry name" value="CATATPASE"/>
</dbReference>
<dbReference type="SFLD" id="SFLDS00003">
    <property type="entry name" value="Haloacid_Dehalogenase"/>
    <property type="match status" value="1"/>
</dbReference>
<dbReference type="SFLD" id="SFLDF00027">
    <property type="entry name" value="p-type_atpase"/>
    <property type="match status" value="1"/>
</dbReference>
<dbReference type="SUPFAM" id="SSF81653">
    <property type="entry name" value="Calcium ATPase, transduction domain A"/>
    <property type="match status" value="1"/>
</dbReference>
<dbReference type="SUPFAM" id="SSF81665">
    <property type="entry name" value="Calcium ATPase, transmembrane domain M"/>
    <property type="match status" value="1"/>
</dbReference>
<dbReference type="SUPFAM" id="SSF56784">
    <property type="entry name" value="HAD-like"/>
    <property type="match status" value="1"/>
</dbReference>
<dbReference type="SUPFAM" id="SSF81660">
    <property type="entry name" value="Metal cation-transporting ATPase, ATP-binding domain N"/>
    <property type="match status" value="1"/>
</dbReference>
<dbReference type="PROSITE" id="PS00154">
    <property type="entry name" value="ATPASE_E1_E2"/>
    <property type="match status" value="1"/>
</dbReference>
<feature type="chain" id="PRO_1000114953" description="Potassium-transporting ATPase ATP-binding subunit">
    <location>
        <begin position="1"/>
        <end position="682"/>
    </location>
</feature>
<feature type="transmembrane region" description="Helical" evidence="1">
    <location>
        <begin position="34"/>
        <end position="54"/>
    </location>
</feature>
<feature type="transmembrane region" description="Helical" evidence="1">
    <location>
        <begin position="62"/>
        <end position="82"/>
    </location>
</feature>
<feature type="transmembrane region" description="Helical" evidence="1">
    <location>
        <begin position="219"/>
        <end position="239"/>
    </location>
</feature>
<feature type="transmembrane region" description="Helical" evidence="1">
    <location>
        <begin position="254"/>
        <end position="274"/>
    </location>
</feature>
<feature type="transmembrane region" description="Helical" evidence="1">
    <location>
        <begin position="588"/>
        <end position="608"/>
    </location>
</feature>
<feature type="transmembrane region" description="Helical" evidence="1">
    <location>
        <begin position="616"/>
        <end position="636"/>
    </location>
</feature>
<feature type="transmembrane region" description="Helical" evidence="1">
    <location>
        <begin position="656"/>
        <end position="676"/>
    </location>
</feature>
<feature type="active site" description="4-aspartylphosphate intermediate" evidence="1">
    <location>
        <position position="307"/>
    </location>
</feature>
<feature type="binding site" evidence="1">
    <location>
        <position position="344"/>
    </location>
    <ligand>
        <name>ATP</name>
        <dbReference type="ChEBI" id="CHEBI:30616"/>
    </ligand>
</feature>
<feature type="binding site" evidence="1">
    <location>
        <position position="348"/>
    </location>
    <ligand>
        <name>ATP</name>
        <dbReference type="ChEBI" id="CHEBI:30616"/>
    </ligand>
</feature>
<feature type="binding site" evidence="1">
    <location>
        <begin position="377"/>
        <end position="384"/>
    </location>
    <ligand>
        <name>ATP</name>
        <dbReference type="ChEBI" id="CHEBI:30616"/>
    </ligand>
</feature>
<feature type="binding site" evidence="1">
    <location>
        <position position="395"/>
    </location>
    <ligand>
        <name>ATP</name>
        <dbReference type="ChEBI" id="CHEBI:30616"/>
    </ligand>
</feature>
<feature type="binding site" evidence="1">
    <location>
        <position position="518"/>
    </location>
    <ligand>
        <name>Mg(2+)</name>
        <dbReference type="ChEBI" id="CHEBI:18420"/>
    </ligand>
</feature>
<feature type="binding site" evidence="1">
    <location>
        <position position="522"/>
    </location>
    <ligand>
        <name>Mg(2+)</name>
        <dbReference type="ChEBI" id="CHEBI:18420"/>
    </ligand>
</feature>
<keyword id="KW-0067">ATP-binding</keyword>
<keyword id="KW-0997">Cell inner membrane</keyword>
<keyword id="KW-1003">Cell membrane</keyword>
<keyword id="KW-0406">Ion transport</keyword>
<keyword id="KW-0460">Magnesium</keyword>
<keyword id="KW-0472">Membrane</keyword>
<keyword id="KW-0479">Metal-binding</keyword>
<keyword id="KW-0547">Nucleotide-binding</keyword>
<keyword id="KW-0597">Phosphoprotein</keyword>
<keyword id="KW-0630">Potassium</keyword>
<keyword id="KW-0633">Potassium transport</keyword>
<keyword id="KW-1278">Translocase</keyword>
<keyword id="KW-0812">Transmembrane</keyword>
<keyword id="KW-1133">Transmembrane helix</keyword>
<keyword id="KW-0813">Transport</keyword>
<gene>
    <name evidence="1" type="primary">kdpB</name>
    <name type="ordered locus">ECSE_0757</name>
</gene>
<accession>B6HYQ5</accession>
<reference key="1">
    <citation type="journal article" date="2008" name="DNA Res.">
        <title>Complete genome sequence and comparative analysis of the wild-type commensal Escherichia coli strain SE11 isolated from a healthy adult.</title>
        <authorList>
            <person name="Oshima K."/>
            <person name="Toh H."/>
            <person name="Ogura Y."/>
            <person name="Sasamoto H."/>
            <person name="Morita H."/>
            <person name="Park S.-H."/>
            <person name="Ooka T."/>
            <person name="Iyoda S."/>
            <person name="Taylor T.D."/>
            <person name="Hayashi T."/>
            <person name="Itoh K."/>
            <person name="Hattori M."/>
        </authorList>
    </citation>
    <scope>NUCLEOTIDE SEQUENCE [LARGE SCALE GENOMIC DNA]</scope>
    <source>
        <strain>SE11</strain>
    </source>
</reference>
<proteinExistence type="inferred from homology"/>
<name>KDPB_ECOSE</name>